<accession>Q5LY84</accession>
<reference key="1">
    <citation type="journal article" date="2004" name="Nat. Biotechnol.">
        <title>Complete sequence and comparative genome analysis of the dairy bacterium Streptococcus thermophilus.</title>
        <authorList>
            <person name="Bolotin A."/>
            <person name="Quinquis B."/>
            <person name="Renault P."/>
            <person name="Sorokin A."/>
            <person name="Ehrlich S.D."/>
            <person name="Kulakauskas S."/>
            <person name="Lapidus A."/>
            <person name="Goltsman E."/>
            <person name="Mazur M."/>
            <person name="Pusch G.D."/>
            <person name="Fonstein M."/>
            <person name="Overbeek R."/>
            <person name="Kyprides N."/>
            <person name="Purnelle B."/>
            <person name="Prozzi D."/>
            <person name="Ngui K."/>
            <person name="Masuy D."/>
            <person name="Hancy F."/>
            <person name="Burteau S."/>
            <person name="Boutry M."/>
            <person name="Delcour J."/>
            <person name="Goffeau A."/>
            <person name="Hols P."/>
        </authorList>
    </citation>
    <scope>NUCLEOTIDE SEQUENCE [LARGE SCALE GENOMIC DNA]</scope>
    <source>
        <strain>CNRZ 1066</strain>
    </source>
</reference>
<organism>
    <name type="scientific">Streptococcus thermophilus (strain CNRZ 1066)</name>
    <dbReference type="NCBI Taxonomy" id="299768"/>
    <lineage>
        <taxon>Bacteria</taxon>
        <taxon>Bacillati</taxon>
        <taxon>Bacillota</taxon>
        <taxon>Bacilli</taxon>
        <taxon>Lactobacillales</taxon>
        <taxon>Streptococcaceae</taxon>
        <taxon>Streptococcus</taxon>
    </lineage>
</organism>
<gene>
    <name evidence="1" type="primary">proA</name>
    <name type="ordered locus">str1710</name>
</gene>
<protein>
    <recommendedName>
        <fullName evidence="1">Gamma-glutamyl phosphate reductase</fullName>
        <shortName evidence="1">GPR</shortName>
        <ecNumber evidence="1">1.2.1.41</ecNumber>
    </recommendedName>
    <alternativeName>
        <fullName evidence="1">Glutamate-5-semialdehyde dehydrogenase</fullName>
    </alternativeName>
    <alternativeName>
        <fullName evidence="1">Glutamyl-gamma-semialdehyde dehydrogenase</fullName>
        <shortName evidence="1">GSA dehydrogenase</shortName>
    </alternativeName>
</protein>
<evidence type="ECO:0000255" key="1">
    <source>
        <dbReference type="HAMAP-Rule" id="MF_00412"/>
    </source>
</evidence>
<sequence>MTYIDTLGQQAKVASRQIAKLSTAAKNDLLNQVAKALVAESDYIITENAKDMANASENGISKIMQDRLLLTEDRIAGIAEGVRQVADLQDPIGQVVRGYTNLDGLKIVQKRVPMGVIAMIFESRPNVSIDAFSLAFKTNNAIILRGGRDAINSNKALVTVARKALKNAGITADAVQFVEDTSHEVAEELMVATKYVDLLIPRGGARLIQTVKEKAKVPVIETGVGNCHIYVDKYANLDMATQIVINAKTQRPSVCNAAESLVVHADIVEEFLPNLEKAILKIQSVEFRADERALKLMEKAVPASPEDFATEFLDYIMSVKVVDSLDEAINWINTYTTSHSEAIVTQDISRAEQFQDDVDAAAVYVNASTRFTDGFVFGLGAEIGISTQKMHARGPMGLEALTSTKFYINGQGQIRE</sequence>
<name>PROA_STRT1</name>
<keyword id="KW-0028">Amino-acid biosynthesis</keyword>
<keyword id="KW-0963">Cytoplasm</keyword>
<keyword id="KW-0521">NADP</keyword>
<keyword id="KW-0560">Oxidoreductase</keyword>
<keyword id="KW-0641">Proline biosynthesis</keyword>
<feature type="chain" id="PRO_0000189795" description="Gamma-glutamyl phosphate reductase">
    <location>
        <begin position="1"/>
        <end position="416"/>
    </location>
</feature>
<dbReference type="EC" id="1.2.1.41" evidence="1"/>
<dbReference type="EMBL" id="CP000024">
    <property type="protein sequence ID" value="AAV63230.1"/>
    <property type="molecule type" value="Genomic_DNA"/>
</dbReference>
<dbReference type="RefSeq" id="WP_011226515.1">
    <property type="nucleotide sequence ID" value="NC_006449.1"/>
</dbReference>
<dbReference type="SMR" id="Q5LY84"/>
<dbReference type="KEGG" id="stc:str1710"/>
<dbReference type="HOGENOM" id="CLU_030231_0_0_9"/>
<dbReference type="UniPathway" id="UPA00098">
    <property type="reaction ID" value="UER00360"/>
</dbReference>
<dbReference type="GO" id="GO:0005737">
    <property type="term" value="C:cytoplasm"/>
    <property type="evidence" value="ECO:0007669"/>
    <property type="project" value="UniProtKB-SubCell"/>
</dbReference>
<dbReference type="GO" id="GO:0004350">
    <property type="term" value="F:glutamate-5-semialdehyde dehydrogenase activity"/>
    <property type="evidence" value="ECO:0007669"/>
    <property type="project" value="UniProtKB-UniRule"/>
</dbReference>
<dbReference type="GO" id="GO:0050661">
    <property type="term" value="F:NADP binding"/>
    <property type="evidence" value="ECO:0007669"/>
    <property type="project" value="InterPro"/>
</dbReference>
<dbReference type="GO" id="GO:0055129">
    <property type="term" value="P:L-proline biosynthetic process"/>
    <property type="evidence" value="ECO:0007669"/>
    <property type="project" value="UniProtKB-UniRule"/>
</dbReference>
<dbReference type="CDD" id="cd07079">
    <property type="entry name" value="ALDH_F18-19_ProA-GPR"/>
    <property type="match status" value="1"/>
</dbReference>
<dbReference type="FunFam" id="3.40.309.10:FF:000006">
    <property type="entry name" value="Gamma-glutamyl phosphate reductase"/>
    <property type="match status" value="1"/>
</dbReference>
<dbReference type="Gene3D" id="3.40.605.10">
    <property type="entry name" value="Aldehyde Dehydrogenase, Chain A, domain 1"/>
    <property type="match status" value="1"/>
</dbReference>
<dbReference type="Gene3D" id="3.40.309.10">
    <property type="entry name" value="Aldehyde Dehydrogenase, Chain A, domain 2"/>
    <property type="match status" value="1"/>
</dbReference>
<dbReference type="HAMAP" id="MF_00412">
    <property type="entry name" value="ProA"/>
    <property type="match status" value="1"/>
</dbReference>
<dbReference type="InterPro" id="IPR016161">
    <property type="entry name" value="Ald_DH/histidinol_DH"/>
</dbReference>
<dbReference type="InterPro" id="IPR016163">
    <property type="entry name" value="Ald_DH_C"/>
</dbReference>
<dbReference type="InterPro" id="IPR016162">
    <property type="entry name" value="Ald_DH_N"/>
</dbReference>
<dbReference type="InterPro" id="IPR015590">
    <property type="entry name" value="Aldehyde_DH_dom"/>
</dbReference>
<dbReference type="InterPro" id="IPR020593">
    <property type="entry name" value="G-glutamylP_reductase_CS"/>
</dbReference>
<dbReference type="InterPro" id="IPR012134">
    <property type="entry name" value="Glu-5-SA_DH"/>
</dbReference>
<dbReference type="InterPro" id="IPR000965">
    <property type="entry name" value="GPR_dom"/>
</dbReference>
<dbReference type="NCBIfam" id="NF001221">
    <property type="entry name" value="PRK00197.1"/>
    <property type="match status" value="1"/>
</dbReference>
<dbReference type="NCBIfam" id="TIGR00407">
    <property type="entry name" value="proA"/>
    <property type="match status" value="1"/>
</dbReference>
<dbReference type="PANTHER" id="PTHR11063:SF8">
    <property type="entry name" value="DELTA-1-PYRROLINE-5-CARBOXYLATE SYNTHASE"/>
    <property type="match status" value="1"/>
</dbReference>
<dbReference type="PANTHER" id="PTHR11063">
    <property type="entry name" value="GLUTAMATE SEMIALDEHYDE DEHYDROGENASE"/>
    <property type="match status" value="1"/>
</dbReference>
<dbReference type="Pfam" id="PF00171">
    <property type="entry name" value="Aldedh"/>
    <property type="match status" value="2"/>
</dbReference>
<dbReference type="PIRSF" id="PIRSF000151">
    <property type="entry name" value="GPR"/>
    <property type="match status" value="1"/>
</dbReference>
<dbReference type="SUPFAM" id="SSF53720">
    <property type="entry name" value="ALDH-like"/>
    <property type="match status" value="1"/>
</dbReference>
<dbReference type="PROSITE" id="PS01223">
    <property type="entry name" value="PROA"/>
    <property type="match status" value="1"/>
</dbReference>
<proteinExistence type="inferred from homology"/>
<comment type="function">
    <text evidence="1">Catalyzes the NADPH-dependent reduction of L-glutamate 5-phosphate into L-glutamate 5-semialdehyde and phosphate. The product spontaneously undergoes cyclization to form 1-pyrroline-5-carboxylate.</text>
</comment>
<comment type="catalytic activity">
    <reaction evidence="1">
        <text>L-glutamate 5-semialdehyde + phosphate + NADP(+) = L-glutamyl 5-phosphate + NADPH + H(+)</text>
        <dbReference type="Rhea" id="RHEA:19541"/>
        <dbReference type="ChEBI" id="CHEBI:15378"/>
        <dbReference type="ChEBI" id="CHEBI:43474"/>
        <dbReference type="ChEBI" id="CHEBI:57783"/>
        <dbReference type="ChEBI" id="CHEBI:58066"/>
        <dbReference type="ChEBI" id="CHEBI:58274"/>
        <dbReference type="ChEBI" id="CHEBI:58349"/>
        <dbReference type="EC" id="1.2.1.41"/>
    </reaction>
</comment>
<comment type="pathway">
    <text evidence="1">Amino-acid biosynthesis; L-proline biosynthesis; L-glutamate 5-semialdehyde from L-glutamate: step 2/2.</text>
</comment>
<comment type="subcellular location">
    <subcellularLocation>
        <location evidence="1">Cytoplasm</location>
    </subcellularLocation>
</comment>
<comment type="similarity">
    <text evidence="1">Belongs to the gamma-glutamyl phosphate reductase family.</text>
</comment>